<keyword id="KW-0012">Acyltransferase</keyword>
<keyword id="KW-0963">Cytoplasm</keyword>
<keyword id="KW-0408">Iron</keyword>
<keyword id="KW-0479">Metal-binding</keyword>
<keyword id="KW-1185">Reference proteome</keyword>
<keyword id="KW-0808">Transferase</keyword>
<keyword id="KW-0819">tRNA processing</keyword>
<sequence length="344" mass="34947">MTVILAIESSCDETGVGIAELTPDGSVVLLADEVASSVEEHARFGGVVPEIASRAHLEALGVTARRALDLAGVQRPDVVAATIGPGLAGALLVGVSAAKGLALAWGVPFYGVNHLGGHIAADVYENGPLPECVALLVSGGHTSLLHVRSLAEPIEELGATVDDAAGEAYDKVARLLGLGYPGGKVLDELAQQGDSSAVPFPRGMTGPRDARHSFSFSGLKTAVARYLEKHGVEADFSPADVAAGFQEAVADVLTMKAVRAATDLGVSTLLIAGGVAANSRVRALAEQRCAETGLTLRVPPLRLCTDNGAMIASFAAHLVAAGAQPSSLQAAADPGLPVVKGQVH</sequence>
<evidence type="ECO:0000255" key="1">
    <source>
        <dbReference type="HAMAP-Rule" id="MF_01445"/>
    </source>
</evidence>
<gene>
    <name evidence="1" type="primary">tsaD</name>
    <name type="synonym">gcp</name>
    <name type="ordered locus">MAB_3734c</name>
</gene>
<reference key="1">
    <citation type="journal article" date="2009" name="PLoS ONE">
        <title>Non mycobacterial virulence genes in the genome of the emerging pathogen Mycobacterium abscessus.</title>
        <authorList>
            <person name="Ripoll F."/>
            <person name="Pasek S."/>
            <person name="Schenowitz C."/>
            <person name="Dossat C."/>
            <person name="Barbe V."/>
            <person name="Rottman M."/>
            <person name="Macheras E."/>
            <person name="Heym B."/>
            <person name="Herrmann J.L."/>
            <person name="Daffe M."/>
            <person name="Brosch R."/>
            <person name="Risler J.L."/>
            <person name="Gaillard J.L."/>
        </authorList>
    </citation>
    <scope>NUCLEOTIDE SEQUENCE [LARGE SCALE GENOMIC DNA]</scope>
    <source>
        <strain>ATCC 19977 / DSM 44196 / CCUG 20993 / CIP 104536 / JCM 13569 / NCTC 13031 / TMC 1543 / L948</strain>
    </source>
</reference>
<accession>B1MG63</accession>
<protein>
    <recommendedName>
        <fullName evidence="1">tRNA N6-adenosine threonylcarbamoyltransferase</fullName>
        <ecNumber evidence="1">2.3.1.234</ecNumber>
    </recommendedName>
    <alternativeName>
        <fullName evidence="1">N6-L-threonylcarbamoyladenine synthase</fullName>
        <shortName evidence="1">t(6)A synthase</shortName>
    </alternativeName>
    <alternativeName>
        <fullName evidence="1">t(6)A37 threonylcarbamoyladenosine biosynthesis protein TsaD</fullName>
    </alternativeName>
    <alternativeName>
        <fullName evidence="1">tRNA threonylcarbamoyladenosine biosynthesis protein TsaD</fullName>
    </alternativeName>
</protein>
<feature type="chain" id="PRO_1000145998" description="tRNA N6-adenosine threonylcarbamoyltransferase">
    <location>
        <begin position="1"/>
        <end position="344"/>
    </location>
</feature>
<feature type="binding site" evidence="1">
    <location>
        <position position="114"/>
    </location>
    <ligand>
        <name>Fe cation</name>
        <dbReference type="ChEBI" id="CHEBI:24875"/>
    </ligand>
</feature>
<feature type="binding site" evidence="1">
    <location>
        <position position="118"/>
    </location>
    <ligand>
        <name>Fe cation</name>
        <dbReference type="ChEBI" id="CHEBI:24875"/>
    </ligand>
</feature>
<feature type="binding site" evidence="1">
    <location>
        <begin position="136"/>
        <end position="140"/>
    </location>
    <ligand>
        <name>substrate</name>
    </ligand>
</feature>
<feature type="binding site" evidence="1">
    <location>
        <position position="170"/>
    </location>
    <ligand>
        <name>substrate</name>
    </ligand>
</feature>
<feature type="binding site" evidence="1">
    <location>
        <position position="183"/>
    </location>
    <ligand>
        <name>substrate</name>
    </ligand>
</feature>
<feature type="binding site" evidence="1">
    <location>
        <position position="187"/>
    </location>
    <ligand>
        <name>substrate</name>
    </ligand>
</feature>
<feature type="binding site" evidence="1">
    <location>
        <position position="278"/>
    </location>
    <ligand>
        <name>substrate</name>
    </ligand>
</feature>
<feature type="binding site" evidence="1">
    <location>
        <position position="306"/>
    </location>
    <ligand>
        <name>Fe cation</name>
        <dbReference type="ChEBI" id="CHEBI:24875"/>
    </ligand>
</feature>
<name>TSAD_MYCA9</name>
<comment type="function">
    <text evidence="1">Required for the formation of a threonylcarbamoyl group on adenosine at position 37 (t(6)A37) in tRNAs that read codons beginning with adenine. Is involved in the transfer of the threonylcarbamoyl moiety of threonylcarbamoyl-AMP (TC-AMP) to the N6 group of A37, together with TsaE and TsaB. TsaD likely plays a direct catalytic role in this reaction.</text>
</comment>
<comment type="catalytic activity">
    <reaction evidence="1">
        <text>L-threonylcarbamoyladenylate + adenosine(37) in tRNA = N(6)-L-threonylcarbamoyladenosine(37) in tRNA + AMP + H(+)</text>
        <dbReference type="Rhea" id="RHEA:37059"/>
        <dbReference type="Rhea" id="RHEA-COMP:10162"/>
        <dbReference type="Rhea" id="RHEA-COMP:10163"/>
        <dbReference type="ChEBI" id="CHEBI:15378"/>
        <dbReference type="ChEBI" id="CHEBI:73682"/>
        <dbReference type="ChEBI" id="CHEBI:74411"/>
        <dbReference type="ChEBI" id="CHEBI:74418"/>
        <dbReference type="ChEBI" id="CHEBI:456215"/>
        <dbReference type="EC" id="2.3.1.234"/>
    </reaction>
</comment>
<comment type="cofactor">
    <cofactor evidence="1">
        <name>Fe(2+)</name>
        <dbReference type="ChEBI" id="CHEBI:29033"/>
    </cofactor>
    <text evidence="1">Binds 1 Fe(2+) ion per subunit.</text>
</comment>
<comment type="subcellular location">
    <subcellularLocation>
        <location evidence="1">Cytoplasm</location>
    </subcellularLocation>
</comment>
<comment type="similarity">
    <text evidence="1">Belongs to the KAE1 / TsaD family.</text>
</comment>
<proteinExistence type="inferred from homology"/>
<dbReference type="EC" id="2.3.1.234" evidence="1"/>
<dbReference type="EMBL" id="CU458896">
    <property type="protein sequence ID" value="CAM63808.1"/>
    <property type="molecule type" value="Genomic_DNA"/>
</dbReference>
<dbReference type="RefSeq" id="WP_005080603.1">
    <property type="nucleotide sequence ID" value="NZ_MLCG01000001.1"/>
</dbReference>
<dbReference type="SMR" id="B1MG63"/>
<dbReference type="GeneID" id="93380673"/>
<dbReference type="KEGG" id="mab:MAB_3734c"/>
<dbReference type="Proteomes" id="UP000007137">
    <property type="component" value="Chromosome"/>
</dbReference>
<dbReference type="GO" id="GO:0005737">
    <property type="term" value="C:cytoplasm"/>
    <property type="evidence" value="ECO:0007669"/>
    <property type="project" value="UniProtKB-SubCell"/>
</dbReference>
<dbReference type="GO" id="GO:0005506">
    <property type="term" value="F:iron ion binding"/>
    <property type="evidence" value="ECO:0007669"/>
    <property type="project" value="UniProtKB-UniRule"/>
</dbReference>
<dbReference type="GO" id="GO:0061711">
    <property type="term" value="F:N(6)-L-threonylcarbamoyladenine synthase activity"/>
    <property type="evidence" value="ECO:0007669"/>
    <property type="project" value="UniProtKB-EC"/>
</dbReference>
<dbReference type="GO" id="GO:0002949">
    <property type="term" value="P:tRNA threonylcarbamoyladenosine modification"/>
    <property type="evidence" value="ECO:0007669"/>
    <property type="project" value="UniProtKB-UniRule"/>
</dbReference>
<dbReference type="CDD" id="cd24133">
    <property type="entry name" value="ASKHA_NBD_TsaD_bac"/>
    <property type="match status" value="1"/>
</dbReference>
<dbReference type="FunFam" id="3.30.420.40:FF:000012">
    <property type="entry name" value="tRNA N6-adenosine threonylcarbamoyltransferase"/>
    <property type="match status" value="1"/>
</dbReference>
<dbReference type="FunFam" id="3.30.420.40:FF:000040">
    <property type="entry name" value="tRNA N6-adenosine threonylcarbamoyltransferase"/>
    <property type="match status" value="1"/>
</dbReference>
<dbReference type="Gene3D" id="3.30.420.40">
    <property type="match status" value="2"/>
</dbReference>
<dbReference type="HAMAP" id="MF_01445">
    <property type="entry name" value="TsaD"/>
    <property type="match status" value="1"/>
</dbReference>
<dbReference type="InterPro" id="IPR043129">
    <property type="entry name" value="ATPase_NBD"/>
</dbReference>
<dbReference type="InterPro" id="IPR000905">
    <property type="entry name" value="Gcp-like_dom"/>
</dbReference>
<dbReference type="InterPro" id="IPR017861">
    <property type="entry name" value="KAE1/TsaD"/>
</dbReference>
<dbReference type="InterPro" id="IPR017860">
    <property type="entry name" value="Peptidase_M22_CS"/>
</dbReference>
<dbReference type="InterPro" id="IPR022450">
    <property type="entry name" value="TsaD"/>
</dbReference>
<dbReference type="NCBIfam" id="TIGR00329">
    <property type="entry name" value="gcp_kae1"/>
    <property type="match status" value="1"/>
</dbReference>
<dbReference type="NCBIfam" id="TIGR03723">
    <property type="entry name" value="T6A_TsaD_YgjD"/>
    <property type="match status" value="1"/>
</dbReference>
<dbReference type="PANTHER" id="PTHR11735">
    <property type="entry name" value="TRNA N6-ADENOSINE THREONYLCARBAMOYLTRANSFERASE"/>
    <property type="match status" value="1"/>
</dbReference>
<dbReference type="PANTHER" id="PTHR11735:SF6">
    <property type="entry name" value="TRNA N6-ADENOSINE THREONYLCARBAMOYLTRANSFERASE, MITOCHONDRIAL"/>
    <property type="match status" value="1"/>
</dbReference>
<dbReference type="Pfam" id="PF00814">
    <property type="entry name" value="TsaD"/>
    <property type="match status" value="1"/>
</dbReference>
<dbReference type="PRINTS" id="PR00789">
    <property type="entry name" value="OSIALOPTASE"/>
</dbReference>
<dbReference type="SUPFAM" id="SSF53067">
    <property type="entry name" value="Actin-like ATPase domain"/>
    <property type="match status" value="2"/>
</dbReference>
<dbReference type="PROSITE" id="PS01016">
    <property type="entry name" value="GLYCOPROTEASE"/>
    <property type="match status" value="1"/>
</dbReference>
<organism>
    <name type="scientific">Mycobacteroides abscessus (strain ATCC 19977 / DSM 44196 / CCUG 20993 / CIP 104536 / JCM 13569 / NCTC 13031 / TMC 1543 / L948)</name>
    <name type="common">Mycobacterium abscessus</name>
    <dbReference type="NCBI Taxonomy" id="561007"/>
    <lineage>
        <taxon>Bacteria</taxon>
        <taxon>Bacillati</taxon>
        <taxon>Actinomycetota</taxon>
        <taxon>Actinomycetes</taxon>
        <taxon>Mycobacteriales</taxon>
        <taxon>Mycobacteriaceae</taxon>
        <taxon>Mycobacteroides</taxon>
        <taxon>Mycobacteroides abscessus</taxon>
    </lineage>
</organism>